<comment type="function">
    <text evidence="1">Reduces the ATPase activity of VCP. Necessary for the fragmentation of Golgi stacks during mitosis and for VCP-mediated reassembly of Golgi stacks after mitosis. May play a role in VCP-mediated formation of transitional endoplasmic reticulum (tER) (By similarity).</text>
</comment>
<comment type="function">
    <text evidence="2 3">Reduces the ATPase activity of VCP. Necessary for the fragmentation of Golgi stacks during mitosis and for VCP-mediated reassembly of Golgi stacks after mitosis. May play a role in VCP-mediated formation of transitional endoplasmic reticulum (tER). Regulates the centrosomal levels of kinase aurK/Aurora during mitotic progression by promoting aurK removal from centrosomes in prophase. Also, regulates spindle orientation during mitosis.</text>
</comment>
<comment type="subcellular location">
    <subcellularLocation>
        <location evidence="2">Nucleus</location>
    </subcellularLocation>
    <subcellularLocation>
        <location evidence="2">Golgi apparatus</location>
        <location evidence="2">Golgi stack</location>
    </subcellularLocation>
    <subcellularLocation>
        <location evidence="2">Cytoplasm</location>
        <location evidence="2">Cytoskeleton</location>
        <location evidence="2">Microtubule organizing center</location>
        <location evidence="2">Centrosome</location>
    </subcellularLocation>
</comment>
<comment type="similarity">
    <text evidence="7">Belongs to the NSFL1C family.</text>
</comment>
<organism>
    <name type="scientific">Dictyostelium discoideum</name>
    <name type="common">Social amoeba</name>
    <dbReference type="NCBI Taxonomy" id="44689"/>
    <lineage>
        <taxon>Eukaryota</taxon>
        <taxon>Amoebozoa</taxon>
        <taxon>Evosea</taxon>
        <taxon>Eumycetozoa</taxon>
        <taxon>Dictyostelia</taxon>
        <taxon>Dictyosteliales</taxon>
        <taxon>Dictyosteliaceae</taxon>
        <taxon>Dictyostelium</taxon>
    </lineage>
</organism>
<sequence length="415" mass="45471">MSDHSEAIATFQSITGASKEESTFYLESHDWDLEKAAQTFTTLQEEENQRNDQPQIEEDYEDEEEEDDHRDPMPASRPVYSKPVAKTVSKKAPAGGRVGGIRTLSDFNNDDHDDHDHSDGDDDEDDRSQQYFTGGEKSGLVVESAPKKGKNGGSGDIVNDVFDSAKRHGAVASNEKKVEKPDSFDSVGYQLGATDQGNRNVSKPKEKDPNSQVVEVKVTFWNQGFTIDDGPLRKYDNPENKELLDDIQRGIVPRELQKKATTPNGLSVTLINNHNQDYVEPAKPKYVAFSGGGQTLGSSSTSTNNNNNNNNNNNNRATTTSTTTTSTPNVSSINVDQSQPTTTVQIRLANGSRLSTTFNHSHTLQDVINYINSSSGSNQSFDLLTGFPQKPVTNPTSTTLKDAGLLNALLIQKLK</sequence>
<keyword id="KW-0963">Cytoplasm</keyword>
<keyword id="KW-0206">Cytoskeleton</keyword>
<keyword id="KW-0333">Golgi apparatus</keyword>
<keyword id="KW-0446">Lipid-binding</keyword>
<keyword id="KW-0539">Nucleus</keyword>
<keyword id="KW-1185">Reference proteome</keyword>
<feature type="chain" id="PRO_0000328492" description="NSFL1 cofactor p47 homolog">
    <location>
        <begin position="1"/>
        <end position="415"/>
    </location>
</feature>
<feature type="domain" description="SEP" evidence="5">
    <location>
        <begin position="213"/>
        <end position="279"/>
    </location>
</feature>
<feature type="domain" description="UBX" evidence="4">
    <location>
        <begin position="337"/>
        <end position="413"/>
    </location>
</feature>
<feature type="region of interest" description="Disordered" evidence="6">
    <location>
        <begin position="1"/>
        <end position="21"/>
    </location>
</feature>
<feature type="region of interest" description="Disordered" evidence="6">
    <location>
        <begin position="39"/>
        <end position="210"/>
    </location>
</feature>
<feature type="region of interest" description="Disordered" evidence="6">
    <location>
        <begin position="290"/>
        <end position="338"/>
    </location>
</feature>
<feature type="compositionally biased region" description="Acidic residues" evidence="6">
    <location>
        <begin position="55"/>
        <end position="68"/>
    </location>
</feature>
<feature type="compositionally biased region" description="Basic and acidic residues" evidence="6">
    <location>
        <begin position="109"/>
        <end position="118"/>
    </location>
</feature>
<feature type="compositionally biased region" description="Basic and acidic residues" evidence="6">
    <location>
        <begin position="174"/>
        <end position="183"/>
    </location>
</feature>
<feature type="compositionally biased region" description="Low complexity" evidence="6">
    <location>
        <begin position="298"/>
        <end position="334"/>
    </location>
</feature>
<protein>
    <recommendedName>
        <fullName>NSFL1 cofactor p47 homolog</fullName>
    </recommendedName>
</protein>
<name>NSF1C_DICDI</name>
<dbReference type="EMBL" id="AAFI02000217">
    <property type="protein sequence ID" value="EAL60684.1"/>
    <property type="molecule type" value="Genomic_DNA"/>
</dbReference>
<dbReference type="RefSeq" id="XP_629097.1">
    <property type="nucleotide sequence ID" value="XM_629095.1"/>
</dbReference>
<dbReference type="SMR" id="Q54BQ5"/>
<dbReference type="BioGRID" id="1254259">
    <property type="interactions" value="1"/>
</dbReference>
<dbReference type="FunCoup" id="Q54BQ5">
    <property type="interactions" value="798"/>
</dbReference>
<dbReference type="STRING" id="44689.Q54BQ5"/>
<dbReference type="PaxDb" id="44689-DDB0304493"/>
<dbReference type="EnsemblProtists" id="EAL60684">
    <property type="protein sequence ID" value="EAL60684"/>
    <property type="gene ID" value="DDB_G0293498"/>
</dbReference>
<dbReference type="GeneID" id="8629256"/>
<dbReference type="KEGG" id="ddi:DDB_G0293498"/>
<dbReference type="dictyBase" id="DDB_G0293498"/>
<dbReference type="VEuPathDB" id="AmoebaDB:DDB_G0293498"/>
<dbReference type="eggNOG" id="KOG2086">
    <property type="taxonomic scope" value="Eukaryota"/>
</dbReference>
<dbReference type="HOGENOM" id="CLU_029402_4_1_1"/>
<dbReference type="InParanoid" id="Q54BQ5"/>
<dbReference type="OMA" id="NKDHTDK"/>
<dbReference type="PhylomeDB" id="Q54BQ5"/>
<dbReference type="Reactome" id="R-DDI-9013407">
    <property type="pathway name" value="RHOH GTPase cycle"/>
</dbReference>
<dbReference type="PRO" id="PR:Q54BQ5"/>
<dbReference type="Proteomes" id="UP000002195">
    <property type="component" value="Chromosome 6"/>
</dbReference>
<dbReference type="GO" id="GO:0005813">
    <property type="term" value="C:centrosome"/>
    <property type="evidence" value="ECO:0007669"/>
    <property type="project" value="UniProtKB-SubCell"/>
</dbReference>
<dbReference type="GO" id="GO:0005829">
    <property type="term" value="C:cytosol"/>
    <property type="evidence" value="ECO:0000318"/>
    <property type="project" value="GO_Central"/>
</dbReference>
<dbReference type="GO" id="GO:0005795">
    <property type="term" value="C:Golgi stack"/>
    <property type="evidence" value="ECO:0007669"/>
    <property type="project" value="UniProtKB-SubCell"/>
</dbReference>
<dbReference type="GO" id="GO:0005634">
    <property type="term" value="C:nucleus"/>
    <property type="evidence" value="ECO:0000318"/>
    <property type="project" value="GO_Central"/>
</dbReference>
<dbReference type="GO" id="GO:0008289">
    <property type="term" value="F:lipid binding"/>
    <property type="evidence" value="ECO:0007669"/>
    <property type="project" value="UniProtKB-KW"/>
</dbReference>
<dbReference type="GO" id="GO:0043130">
    <property type="term" value="F:ubiquitin binding"/>
    <property type="evidence" value="ECO:0000318"/>
    <property type="project" value="GO_Central"/>
</dbReference>
<dbReference type="GO" id="GO:0000045">
    <property type="term" value="P:autophagosome assembly"/>
    <property type="evidence" value="ECO:0000318"/>
    <property type="project" value="GO_Central"/>
</dbReference>
<dbReference type="GO" id="GO:0007030">
    <property type="term" value="P:Golgi organization"/>
    <property type="evidence" value="ECO:0000318"/>
    <property type="project" value="GO_Central"/>
</dbReference>
<dbReference type="GO" id="GO:0061025">
    <property type="term" value="P:membrane fusion"/>
    <property type="evidence" value="ECO:0000318"/>
    <property type="project" value="GO_Central"/>
</dbReference>
<dbReference type="GO" id="GO:0031468">
    <property type="term" value="P:nuclear membrane reassembly"/>
    <property type="evidence" value="ECO:0000318"/>
    <property type="project" value="GO_Central"/>
</dbReference>
<dbReference type="GO" id="GO:0043161">
    <property type="term" value="P:proteasome-mediated ubiquitin-dependent protein catabolic process"/>
    <property type="evidence" value="ECO:0000318"/>
    <property type="project" value="GO_Central"/>
</dbReference>
<dbReference type="CDD" id="cd14349">
    <property type="entry name" value="UBA_CF106"/>
    <property type="match status" value="1"/>
</dbReference>
<dbReference type="CDD" id="cd01770">
    <property type="entry name" value="UBX_UBXN2"/>
    <property type="match status" value="1"/>
</dbReference>
<dbReference type="FunFam" id="3.30.420.210:FF:000002">
    <property type="entry name" value="UBX domain-containing protein 1"/>
    <property type="match status" value="1"/>
</dbReference>
<dbReference type="Gene3D" id="1.10.8.10">
    <property type="entry name" value="DNA helicase RuvA subunit, C-terminal domain"/>
    <property type="match status" value="1"/>
</dbReference>
<dbReference type="Gene3D" id="3.10.20.90">
    <property type="entry name" value="Phosphatidylinositol 3-kinase Catalytic Subunit, Chain A, domain 1"/>
    <property type="match status" value="1"/>
</dbReference>
<dbReference type="Gene3D" id="3.30.420.210">
    <property type="entry name" value="SEP domain"/>
    <property type="match status" value="1"/>
</dbReference>
<dbReference type="InterPro" id="IPR039517">
    <property type="entry name" value="C6orf106_UBA-like"/>
</dbReference>
<dbReference type="InterPro" id="IPR036241">
    <property type="entry name" value="NSFL1C_SEP_dom_sf"/>
</dbReference>
<dbReference type="InterPro" id="IPR012989">
    <property type="entry name" value="SEP_domain"/>
</dbReference>
<dbReference type="InterPro" id="IPR009060">
    <property type="entry name" value="UBA-like_sf"/>
</dbReference>
<dbReference type="InterPro" id="IPR029071">
    <property type="entry name" value="Ubiquitin-like_domsf"/>
</dbReference>
<dbReference type="InterPro" id="IPR001012">
    <property type="entry name" value="UBX_dom"/>
</dbReference>
<dbReference type="PANTHER" id="PTHR23333:SF20">
    <property type="entry name" value="NSFL1 COFACTOR P47"/>
    <property type="match status" value="1"/>
</dbReference>
<dbReference type="PANTHER" id="PTHR23333">
    <property type="entry name" value="UBX DOMAIN CONTAINING PROTEIN"/>
    <property type="match status" value="1"/>
</dbReference>
<dbReference type="Pfam" id="PF08059">
    <property type="entry name" value="SEP"/>
    <property type="match status" value="1"/>
</dbReference>
<dbReference type="Pfam" id="PF14555">
    <property type="entry name" value="UBA_4"/>
    <property type="match status" value="1"/>
</dbReference>
<dbReference type="Pfam" id="PF00789">
    <property type="entry name" value="UBX"/>
    <property type="match status" value="1"/>
</dbReference>
<dbReference type="SMART" id="SM00553">
    <property type="entry name" value="SEP"/>
    <property type="match status" value="1"/>
</dbReference>
<dbReference type="SMART" id="SM00166">
    <property type="entry name" value="UBX"/>
    <property type="match status" value="1"/>
</dbReference>
<dbReference type="SUPFAM" id="SSF102848">
    <property type="entry name" value="NSFL1 (p97 ATPase) cofactor p47, SEP domain"/>
    <property type="match status" value="1"/>
</dbReference>
<dbReference type="SUPFAM" id="SSF46934">
    <property type="entry name" value="UBA-like"/>
    <property type="match status" value="1"/>
</dbReference>
<dbReference type="SUPFAM" id="SSF54236">
    <property type="entry name" value="Ubiquitin-like"/>
    <property type="match status" value="1"/>
</dbReference>
<dbReference type="PROSITE" id="PS51399">
    <property type="entry name" value="SEP"/>
    <property type="match status" value="1"/>
</dbReference>
<dbReference type="PROSITE" id="PS50033">
    <property type="entry name" value="UBX"/>
    <property type="match status" value="1"/>
</dbReference>
<proteinExistence type="inferred from homology"/>
<accession>Q54BQ5</accession>
<evidence type="ECO:0000250" key="1"/>
<evidence type="ECO:0000250" key="2">
    <source>
        <dbReference type="UniProtKB" id="O35987"/>
    </source>
</evidence>
<evidence type="ECO:0000250" key="3">
    <source>
        <dbReference type="UniProtKB" id="Q9UNZ2"/>
    </source>
</evidence>
<evidence type="ECO:0000255" key="4">
    <source>
        <dbReference type="PROSITE-ProRule" id="PRU00215"/>
    </source>
</evidence>
<evidence type="ECO:0000255" key="5">
    <source>
        <dbReference type="PROSITE-ProRule" id="PRU00732"/>
    </source>
</evidence>
<evidence type="ECO:0000256" key="6">
    <source>
        <dbReference type="SAM" id="MobiDB-lite"/>
    </source>
</evidence>
<evidence type="ECO:0000305" key="7"/>
<gene>
    <name type="primary">nsfl1c</name>
    <name type="ORF">DDB_G0293498</name>
</gene>
<reference key="1">
    <citation type="journal article" date="2005" name="Nature">
        <title>The genome of the social amoeba Dictyostelium discoideum.</title>
        <authorList>
            <person name="Eichinger L."/>
            <person name="Pachebat J.A."/>
            <person name="Gloeckner G."/>
            <person name="Rajandream M.A."/>
            <person name="Sucgang R."/>
            <person name="Berriman M."/>
            <person name="Song J."/>
            <person name="Olsen R."/>
            <person name="Szafranski K."/>
            <person name="Xu Q."/>
            <person name="Tunggal B."/>
            <person name="Kummerfeld S."/>
            <person name="Madera M."/>
            <person name="Konfortov B.A."/>
            <person name="Rivero F."/>
            <person name="Bankier A.T."/>
            <person name="Lehmann R."/>
            <person name="Hamlin N."/>
            <person name="Davies R."/>
            <person name="Gaudet P."/>
            <person name="Fey P."/>
            <person name="Pilcher K."/>
            <person name="Chen G."/>
            <person name="Saunders D."/>
            <person name="Sodergren E.J."/>
            <person name="Davis P."/>
            <person name="Kerhornou A."/>
            <person name="Nie X."/>
            <person name="Hall N."/>
            <person name="Anjard C."/>
            <person name="Hemphill L."/>
            <person name="Bason N."/>
            <person name="Farbrother P."/>
            <person name="Desany B."/>
            <person name="Just E."/>
            <person name="Morio T."/>
            <person name="Rost R."/>
            <person name="Churcher C.M."/>
            <person name="Cooper J."/>
            <person name="Haydock S."/>
            <person name="van Driessche N."/>
            <person name="Cronin A."/>
            <person name="Goodhead I."/>
            <person name="Muzny D.M."/>
            <person name="Mourier T."/>
            <person name="Pain A."/>
            <person name="Lu M."/>
            <person name="Harper D."/>
            <person name="Lindsay R."/>
            <person name="Hauser H."/>
            <person name="James K.D."/>
            <person name="Quiles M."/>
            <person name="Madan Babu M."/>
            <person name="Saito T."/>
            <person name="Buchrieser C."/>
            <person name="Wardroper A."/>
            <person name="Felder M."/>
            <person name="Thangavelu M."/>
            <person name="Johnson D."/>
            <person name="Knights A."/>
            <person name="Loulseged H."/>
            <person name="Mungall K.L."/>
            <person name="Oliver K."/>
            <person name="Price C."/>
            <person name="Quail M.A."/>
            <person name="Urushihara H."/>
            <person name="Hernandez J."/>
            <person name="Rabbinowitsch E."/>
            <person name="Steffen D."/>
            <person name="Sanders M."/>
            <person name="Ma J."/>
            <person name="Kohara Y."/>
            <person name="Sharp S."/>
            <person name="Simmonds M.N."/>
            <person name="Spiegler S."/>
            <person name="Tivey A."/>
            <person name="Sugano S."/>
            <person name="White B."/>
            <person name="Walker D."/>
            <person name="Woodward J.R."/>
            <person name="Winckler T."/>
            <person name="Tanaka Y."/>
            <person name="Shaulsky G."/>
            <person name="Schleicher M."/>
            <person name="Weinstock G.M."/>
            <person name="Rosenthal A."/>
            <person name="Cox E.C."/>
            <person name="Chisholm R.L."/>
            <person name="Gibbs R.A."/>
            <person name="Loomis W.F."/>
            <person name="Platzer M."/>
            <person name="Kay R.R."/>
            <person name="Williams J.G."/>
            <person name="Dear P.H."/>
            <person name="Noegel A.A."/>
            <person name="Barrell B.G."/>
            <person name="Kuspa A."/>
        </authorList>
    </citation>
    <scope>NUCLEOTIDE SEQUENCE [LARGE SCALE GENOMIC DNA]</scope>
    <source>
        <strain>AX4</strain>
    </source>
</reference>